<proteinExistence type="evidence at transcript level"/>
<comment type="function">
    <text evidence="1">Required for the export of mRNAs containing poly(A) tails from the nucleus into the cytoplasm.</text>
</comment>
<comment type="subunit">
    <text>Probable component of the nuclear pore complex (NPC).</text>
</comment>
<comment type="subcellular location">
    <subcellularLocation>
        <location evidence="1">Nucleus</location>
        <location evidence="1">Nuclear pore complex</location>
    </subcellularLocation>
    <subcellularLocation>
        <location evidence="1">Nucleus membrane</location>
        <topology evidence="1">Peripheral membrane protein</topology>
        <orientation evidence="1">Cytoplasmic side</orientation>
    </subcellularLocation>
</comment>
<comment type="domain">
    <text evidence="1">The FG repeats are interaction sites for karyopherins (importins, exportins) and form probably an affinity gradient, guiding the transport proteins unidirectionally with their cargo through the NPC.</text>
</comment>
<protein>
    <recommendedName>
        <fullName evidence="4">Nucleoporin NUP42</fullName>
    </recommendedName>
    <alternativeName>
        <fullName>Nucleoporin-like protein 2</fullName>
    </alternativeName>
</protein>
<evidence type="ECO:0000250" key="1"/>
<evidence type="ECO:0000255" key="2">
    <source>
        <dbReference type="PROSITE-ProRule" id="PRU00723"/>
    </source>
</evidence>
<evidence type="ECO:0000256" key="3">
    <source>
        <dbReference type="SAM" id="MobiDB-lite"/>
    </source>
</evidence>
<evidence type="ECO:0000305" key="4"/>
<dbReference type="EMBL" id="AJ720962">
    <property type="protein sequence ID" value="CAG32621.1"/>
    <property type="molecule type" value="mRNA"/>
</dbReference>
<dbReference type="RefSeq" id="NP_001026155.1">
    <property type="nucleotide sequence ID" value="NM_001030984.1"/>
</dbReference>
<dbReference type="SMR" id="Q5ZI22"/>
<dbReference type="FunCoup" id="Q5ZI22">
    <property type="interactions" value="1668"/>
</dbReference>
<dbReference type="STRING" id="9031.ENSGALP00000017786"/>
<dbReference type="GlyGen" id="Q5ZI22">
    <property type="glycosylation" value="1 site"/>
</dbReference>
<dbReference type="PaxDb" id="9031-ENSGALP00000017786"/>
<dbReference type="GeneID" id="420614"/>
<dbReference type="KEGG" id="gga:420614"/>
<dbReference type="CTD" id="11097"/>
<dbReference type="VEuPathDB" id="HostDB:geneid_420614"/>
<dbReference type="eggNOG" id="ENOG502R2TD">
    <property type="taxonomic scope" value="Eukaryota"/>
</dbReference>
<dbReference type="InParanoid" id="Q5ZI22"/>
<dbReference type="OrthoDB" id="9120740at2759"/>
<dbReference type="PhylomeDB" id="Q5ZI22"/>
<dbReference type="PRO" id="PR:Q5ZI22"/>
<dbReference type="Proteomes" id="UP000000539">
    <property type="component" value="Unassembled WGS sequence"/>
</dbReference>
<dbReference type="GO" id="GO:0031965">
    <property type="term" value="C:nuclear membrane"/>
    <property type="evidence" value="ECO:0007669"/>
    <property type="project" value="UniProtKB-SubCell"/>
</dbReference>
<dbReference type="GO" id="GO:0005643">
    <property type="term" value="C:nuclear pore"/>
    <property type="evidence" value="ECO:0007669"/>
    <property type="project" value="UniProtKB-SubCell"/>
</dbReference>
<dbReference type="GO" id="GO:0005049">
    <property type="term" value="F:nuclear export signal receptor activity"/>
    <property type="evidence" value="ECO:0000318"/>
    <property type="project" value="GO_Central"/>
</dbReference>
<dbReference type="GO" id="GO:0008270">
    <property type="term" value="F:zinc ion binding"/>
    <property type="evidence" value="ECO:0007669"/>
    <property type="project" value="UniProtKB-KW"/>
</dbReference>
<dbReference type="GO" id="GO:0051028">
    <property type="term" value="P:mRNA transport"/>
    <property type="evidence" value="ECO:0007669"/>
    <property type="project" value="UniProtKB-KW"/>
</dbReference>
<dbReference type="GO" id="GO:0015031">
    <property type="term" value="P:protein transport"/>
    <property type="evidence" value="ECO:0007669"/>
    <property type="project" value="UniProtKB-KW"/>
</dbReference>
<dbReference type="InterPro" id="IPR051767">
    <property type="entry name" value="Nucleoporin_NUP42"/>
</dbReference>
<dbReference type="InterPro" id="IPR000571">
    <property type="entry name" value="Znf_CCCH"/>
</dbReference>
<dbReference type="PANTHER" id="PTHR46527:SF1">
    <property type="entry name" value="NUCLEOPORIN NUP42"/>
    <property type="match status" value="1"/>
</dbReference>
<dbReference type="PANTHER" id="PTHR46527">
    <property type="entry name" value="NUCLEOPORIN-LIKE PROTEIN 2"/>
    <property type="match status" value="1"/>
</dbReference>
<dbReference type="SMART" id="SM00356">
    <property type="entry name" value="ZnF_C3H1"/>
    <property type="match status" value="1"/>
</dbReference>
<dbReference type="PROSITE" id="PS50103">
    <property type="entry name" value="ZF_C3H1"/>
    <property type="match status" value="1"/>
</dbReference>
<organism>
    <name type="scientific">Gallus gallus</name>
    <name type="common">Chicken</name>
    <dbReference type="NCBI Taxonomy" id="9031"/>
    <lineage>
        <taxon>Eukaryota</taxon>
        <taxon>Metazoa</taxon>
        <taxon>Chordata</taxon>
        <taxon>Craniata</taxon>
        <taxon>Vertebrata</taxon>
        <taxon>Euteleostomi</taxon>
        <taxon>Archelosauria</taxon>
        <taxon>Archosauria</taxon>
        <taxon>Dinosauria</taxon>
        <taxon>Saurischia</taxon>
        <taxon>Theropoda</taxon>
        <taxon>Coelurosauria</taxon>
        <taxon>Aves</taxon>
        <taxon>Neognathae</taxon>
        <taxon>Galloanserae</taxon>
        <taxon>Galliformes</taxon>
        <taxon>Phasianidae</taxon>
        <taxon>Phasianinae</taxon>
        <taxon>Gallus</taxon>
    </lineage>
</organism>
<accession>Q5ZI22</accession>
<gene>
    <name type="primary">NUP42</name>
    <name type="synonym">NUPL2</name>
    <name type="ORF">RCJMB04_31e20</name>
</gene>
<reference key="1">
    <citation type="journal article" date="2005" name="Genome Biol.">
        <title>Full-length cDNAs from chicken bursal lymphocytes to facilitate gene function analysis.</title>
        <authorList>
            <person name="Caldwell R.B."/>
            <person name="Kierzek A.M."/>
            <person name="Arakawa H."/>
            <person name="Bezzubov Y."/>
            <person name="Zaim J."/>
            <person name="Fiedler P."/>
            <person name="Kutter S."/>
            <person name="Blagodatski A."/>
            <person name="Kostovska D."/>
            <person name="Koter M."/>
            <person name="Plachy J."/>
            <person name="Carninci P."/>
            <person name="Hayashizaki Y."/>
            <person name="Buerstedde J.-M."/>
        </authorList>
    </citation>
    <scope>NUCLEOTIDE SEQUENCE [LARGE SCALE MRNA]</scope>
    <source>
        <strain>CB</strain>
        <tissue>Bursa of Fabricius</tissue>
    </source>
</reference>
<sequence length="413" mass="42317">MTICQFFLQGRCRFGDRCWNEHPRGGGGRPHSAGPVRGAGGGWGAASQRYANVIQPPIFKHSTWGGSGDGGGFSGASDFGSPGNKSAVFSQNRFSALSSAHPADGFSDEEQRLLDCVAKDMATWESSGQWMFSCYSPEAGKPNVSGFREFSAEEVRLEYYNCSANNNTENYINSVNQLVQERRNRLQELKALNASGKESLLSQLKNAVTQPLPSLGFGGQQASSFGFPSFPVSSSSGAASFSFKANPSVPPGNAAAVGSSAAASNPPTFGVTSSPSVPNPVGSGNSSAPSAASFSFKTSGTTSGCGTSGLSGFGSSAAANSSSTAPLPVSATPSAATGTSQSGASSASAAQTAGASGHNVTSAPSAVPNGIASDKLYTPRSELTAEELEQFEAKRFTLGKIPLKPPPIDLLYL</sequence>
<keyword id="KW-0472">Membrane</keyword>
<keyword id="KW-0479">Metal-binding</keyword>
<keyword id="KW-0509">mRNA transport</keyword>
<keyword id="KW-0906">Nuclear pore complex</keyword>
<keyword id="KW-0539">Nucleus</keyword>
<keyword id="KW-0653">Protein transport</keyword>
<keyword id="KW-1185">Reference proteome</keyword>
<keyword id="KW-0677">Repeat</keyword>
<keyword id="KW-0811">Translocation</keyword>
<keyword id="KW-0813">Transport</keyword>
<keyword id="KW-0862">Zinc</keyword>
<keyword id="KW-0863">Zinc-finger</keyword>
<name>NUP42_CHICK</name>
<feature type="chain" id="PRO_0000204898" description="Nucleoporin NUP42">
    <location>
        <begin position="1"/>
        <end position="413"/>
    </location>
</feature>
<feature type="repeat" description="FG 1">
    <location>
        <begin position="14"/>
        <end position="15"/>
    </location>
</feature>
<feature type="repeat" description="FG 2">
    <location>
        <begin position="79"/>
        <end position="80"/>
    </location>
</feature>
<feature type="repeat" description="FG 3">
    <location>
        <begin position="217"/>
        <end position="218"/>
    </location>
</feature>
<feature type="repeat" description="FG 4">
    <location>
        <begin position="225"/>
        <end position="226"/>
    </location>
</feature>
<feature type="repeat" description="FG 5">
    <location>
        <begin position="269"/>
        <end position="270"/>
    </location>
</feature>
<feature type="repeat" description="FG 6">
    <location>
        <begin position="313"/>
        <end position="314"/>
    </location>
</feature>
<feature type="zinc finger region" description="C3H1-type" evidence="2">
    <location>
        <begin position="1"/>
        <end position="25"/>
    </location>
</feature>
<feature type="region of interest" description="Disordered" evidence="3">
    <location>
        <begin position="252"/>
        <end position="293"/>
    </location>
</feature>
<feature type="region of interest" description="Disordered" evidence="3">
    <location>
        <begin position="321"/>
        <end position="369"/>
    </location>
</feature>
<feature type="compositionally biased region" description="Low complexity" evidence="3">
    <location>
        <begin position="321"/>
        <end position="357"/>
    </location>
</feature>